<keyword id="KW-0067">ATP-binding</keyword>
<keyword id="KW-0963">Cytoplasm</keyword>
<keyword id="KW-0206">Cytoskeleton</keyword>
<keyword id="KW-0413">Isomerase</keyword>
<keyword id="KW-0472">Membrane</keyword>
<keyword id="KW-0493">Microtubule</keyword>
<keyword id="KW-0547">Nucleotide-binding</keyword>
<keyword id="KW-1185">Reference proteome</keyword>
<accession>A7T395</accession>
<protein>
    <recommendedName>
        <fullName evidence="2">Spastin</fullName>
        <ecNumber evidence="2">5.6.1.1</ecNumber>
    </recommendedName>
</protein>
<proteinExistence type="inferred from homology"/>
<organism>
    <name type="scientific">Nematostella vectensis</name>
    <name type="common">Starlet sea anemone</name>
    <dbReference type="NCBI Taxonomy" id="45351"/>
    <lineage>
        <taxon>Eukaryota</taxon>
        <taxon>Metazoa</taxon>
        <taxon>Cnidaria</taxon>
        <taxon>Anthozoa</taxon>
        <taxon>Hexacorallia</taxon>
        <taxon>Actiniaria</taxon>
        <taxon>Edwardsiidae</taxon>
        <taxon>Nematostella</taxon>
    </lineage>
</organism>
<feature type="chain" id="PRO_0000367154" description="Spastin">
    <location>
        <begin position="1"/>
        <end position="597"/>
    </location>
</feature>
<feature type="topological domain" description="Cytoplasmic" evidence="2">
    <location>
        <begin position="1"/>
        <end position="20"/>
    </location>
</feature>
<feature type="intramembrane region" description="Helical" evidence="2">
    <location>
        <begin position="21"/>
        <end position="37"/>
    </location>
</feature>
<feature type="topological domain" description="Cytoplasmic" evidence="2">
    <location>
        <begin position="38"/>
        <end position="597"/>
    </location>
</feature>
<feature type="domain" description="MIT" evidence="1">
    <location>
        <begin position="91"/>
        <end position="168"/>
    </location>
</feature>
<feature type="region of interest" description="Disordered" evidence="3">
    <location>
        <begin position="56"/>
        <end position="80"/>
    </location>
</feature>
<feature type="region of interest" description="Disordered" evidence="3">
    <location>
        <begin position="193"/>
        <end position="289"/>
    </location>
</feature>
<feature type="compositionally biased region" description="Polar residues" evidence="3">
    <location>
        <begin position="214"/>
        <end position="231"/>
    </location>
</feature>
<feature type="compositionally biased region" description="Low complexity" evidence="3">
    <location>
        <begin position="232"/>
        <end position="252"/>
    </location>
</feature>
<dbReference type="EC" id="5.6.1.1" evidence="2"/>
<dbReference type="EMBL" id="DS470442">
    <property type="protein sequence ID" value="EDO29570.1"/>
    <property type="status" value="ALT_INIT"/>
    <property type="molecule type" value="Genomic_DNA"/>
</dbReference>
<dbReference type="RefSeq" id="XP_001621670.1">
    <property type="nucleotide sequence ID" value="XM_001621620.1"/>
</dbReference>
<dbReference type="SMR" id="A7T395"/>
<dbReference type="FunCoup" id="A7T395">
    <property type="interactions" value="792"/>
</dbReference>
<dbReference type="STRING" id="45351.A7T395"/>
<dbReference type="eggNOG" id="KOG0740">
    <property type="taxonomic scope" value="Eukaryota"/>
</dbReference>
<dbReference type="HOGENOM" id="CLU_000688_21_5_1"/>
<dbReference type="InParanoid" id="A7T395"/>
<dbReference type="PhylomeDB" id="A7T395"/>
<dbReference type="Proteomes" id="UP000001593">
    <property type="component" value="Unassembled WGS sequence"/>
</dbReference>
<dbReference type="GO" id="GO:0005813">
    <property type="term" value="C:centrosome"/>
    <property type="evidence" value="ECO:0007669"/>
    <property type="project" value="UniProtKB-SubCell"/>
</dbReference>
<dbReference type="GO" id="GO:0005737">
    <property type="term" value="C:cytoplasm"/>
    <property type="evidence" value="ECO:0007669"/>
    <property type="project" value="UniProtKB-UniRule"/>
</dbReference>
<dbReference type="GO" id="GO:0016020">
    <property type="term" value="C:membrane"/>
    <property type="evidence" value="ECO:0007669"/>
    <property type="project" value="UniProtKB-SubCell"/>
</dbReference>
<dbReference type="GO" id="GO:0005874">
    <property type="term" value="C:microtubule"/>
    <property type="evidence" value="ECO:0007669"/>
    <property type="project" value="UniProtKB-UniRule"/>
</dbReference>
<dbReference type="GO" id="GO:0015630">
    <property type="term" value="C:microtubule cytoskeleton"/>
    <property type="evidence" value="ECO:0000318"/>
    <property type="project" value="GO_Central"/>
</dbReference>
<dbReference type="GO" id="GO:0005819">
    <property type="term" value="C:spindle"/>
    <property type="evidence" value="ECO:0007669"/>
    <property type="project" value="UniProtKB-UniRule"/>
</dbReference>
<dbReference type="GO" id="GO:0005524">
    <property type="term" value="F:ATP binding"/>
    <property type="evidence" value="ECO:0007669"/>
    <property type="project" value="UniProtKB-UniRule"/>
</dbReference>
<dbReference type="GO" id="GO:0016887">
    <property type="term" value="F:ATP hydrolysis activity"/>
    <property type="evidence" value="ECO:0000318"/>
    <property type="project" value="GO_Central"/>
</dbReference>
<dbReference type="GO" id="GO:0008017">
    <property type="term" value="F:microtubule binding"/>
    <property type="evidence" value="ECO:0007669"/>
    <property type="project" value="UniProtKB-UniRule"/>
</dbReference>
<dbReference type="GO" id="GO:0008568">
    <property type="term" value="F:microtubule severing ATPase activity"/>
    <property type="evidence" value="ECO:0007669"/>
    <property type="project" value="UniProtKB-UniRule"/>
</dbReference>
<dbReference type="GO" id="GO:0051013">
    <property type="term" value="P:microtubule severing"/>
    <property type="evidence" value="ECO:0007669"/>
    <property type="project" value="UniProtKB-UniRule"/>
</dbReference>
<dbReference type="GO" id="GO:0031117">
    <property type="term" value="P:positive regulation of microtubule depolymerization"/>
    <property type="evidence" value="ECO:0007669"/>
    <property type="project" value="UniProtKB-UniRule"/>
</dbReference>
<dbReference type="GO" id="GO:0034214">
    <property type="term" value="P:protein hexamerization"/>
    <property type="evidence" value="ECO:0007669"/>
    <property type="project" value="UniProtKB-UniRule"/>
</dbReference>
<dbReference type="CDD" id="cd19509">
    <property type="entry name" value="RecA-like_VPS4-like"/>
    <property type="match status" value="1"/>
</dbReference>
<dbReference type="FunFam" id="1.10.8.60:FF:000022">
    <property type="entry name" value="Fidgetin like 1"/>
    <property type="match status" value="1"/>
</dbReference>
<dbReference type="FunFam" id="1.20.58.80:FF:000006">
    <property type="entry name" value="Spastin"/>
    <property type="match status" value="1"/>
</dbReference>
<dbReference type="Gene3D" id="1.10.8.60">
    <property type="match status" value="1"/>
</dbReference>
<dbReference type="Gene3D" id="3.40.50.300">
    <property type="entry name" value="P-loop containing nucleotide triphosphate hydrolases"/>
    <property type="match status" value="1"/>
</dbReference>
<dbReference type="Gene3D" id="1.20.58.80">
    <property type="entry name" value="Phosphotransferase system, lactose/cellobiose-type IIA subunit"/>
    <property type="match status" value="1"/>
</dbReference>
<dbReference type="HAMAP" id="MF_03021">
    <property type="entry name" value="Spastin"/>
    <property type="match status" value="1"/>
</dbReference>
<dbReference type="InterPro" id="IPR041569">
    <property type="entry name" value="AAA_lid_3"/>
</dbReference>
<dbReference type="InterPro" id="IPR003959">
    <property type="entry name" value="ATPase_AAA_core"/>
</dbReference>
<dbReference type="InterPro" id="IPR003960">
    <property type="entry name" value="ATPase_AAA_CS"/>
</dbReference>
<dbReference type="InterPro" id="IPR007330">
    <property type="entry name" value="MIT_dom"/>
</dbReference>
<dbReference type="InterPro" id="IPR050304">
    <property type="entry name" value="MT-severing_AAA_ATPase"/>
</dbReference>
<dbReference type="InterPro" id="IPR027417">
    <property type="entry name" value="P-loop_NTPase"/>
</dbReference>
<dbReference type="InterPro" id="IPR015415">
    <property type="entry name" value="Spast_Vps4_C"/>
</dbReference>
<dbReference type="InterPro" id="IPR017179">
    <property type="entry name" value="Spastin"/>
</dbReference>
<dbReference type="PANTHER" id="PTHR23074">
    <property type="entry name" value="AAA DOMAIN-CONTAINING"/>
    <property type="match status" value="1"/>
</dbReference>
<dbReference type="PANTHER" id="PTHR23074:SF86">
    <property type="entry name" value="SPASTIN"/>
    <property type="match status" value="1"/>
</dbReference>
<dbReference type="Pfam" id="PF00004">
    <property type="entry name" value="AAA"/>
    <property type="match status" value="1"/>
</dbReference>
<dbReference type="Pfam" id="PF17862">
    <property type="entry name" value="AAA_lid_3"/>
    <property type="match status" value="1"/>
</dbReference>
<dbReference type="Pfam" id="PF09336">
    <property type="entry name" value="Vps4_C"/>
    <property type="match status" value="1"/>
</dbReference>
<dbReference type="SMART" id="SM00745">
    <property type="entry name" value="MIT"/>
    <property type="match status" value="1"/>
</dbReference>
<dbReference type="SUPFAM" id="SSF52540">
    <property type="entry name" value="P-loop containing nucleoside triphosphate hydrolases"/>
    <property type="match status" value="1"/>
</dbReference>
<dbReference type="PROSITE" id="PS00674">
    <property type="entry name" value="AAA"/>
    <property type="match status" value="1"/>
</dbReference>
<reference key="1">
    <citation type="journal article" date="2007" name="Science">
        <title>Sea anemone genome reveals ancestral eumetazoan gene repertoire and genomic organization.</title>
        <authorList>
            <person name="Putnam N.H."/>
            <person name="Srivastava M."/>
            <person name="Hellsten U."/>
            <person name="Dirks B."/>
            <person name="Chapman J."/>
            <person name="Salamov A."/>
            <person name="Terry A."/>
            <person name="Shapiro H."/>
            <person name="Lindquist E."/>
            <person name="Kapitonov V.V."/>
            <person name="Jurka J."/>
            <person name="Genikhovich G."/>
            <person name="Grigoriev I.V."/>
            <person name="Lucas S.M."/>
            <person name="Steele R.E."/>
            <person name="Finnerty J.R."/>
            <person name="Technau U."/>
            <person name="Martindale M.Q."/>
            <person name="Rokhsar D.S."/>
        </authorList>
    </citation>
    <scope>NUCLEOTIDE SEQUENCE [LARGE SCALE GENOMIC DNA]</scope>
    <source>
        <strain>CH2 X CH6</strain>
    </source>
</reference>
<gene>
    <name type="ORF">v1g144095</name>
</gene>
<name>SPAST_NEMVE</name>
<sequence>MPNNDILRPLAIPAKYVGSFLVFLYNGLYFVFVVNLWSRLFGKATKTEVPPLPKIRKLGKDMASRAPPRRGQSSEDNEDGLPAEIFNVRRHHKQAYAYIARALEVDEGQGSLETKKRAVEFYNRGIEEMEAGLLIPCIDEGEEWDKARRLQEKMEANLENTRERMDELVIIFFIIVVALLVSAGMMDDQPLLSARKTSSEPSQAWDVSKPTGPSYKQSKSYKNSTTVTTKRSQASPSFSSSSSSVNSTAGSSRTKPAKPAPMAAPRRYNPQVRRTKSTKPAMMAKQSCVDEQKKKISHLKGIDPKLANIIMDEILESGPAVHFSDIAGVDNAKKALQEIVILPSLRPELWRGDPTLVLFQVLPYPPGSSHITLPRASTATSFTSCFFSISKRSSLVHPVVASFFVKSLEDLASILTTSLFTIDEVDSLLTERREGEHEHSRRLKTEFLVSFDGVVADPEERILVMGATNRPQELDDAALRRMVKRIHIPLPDKETRKVLLTKLLAKHHNPLSGAEIDRLARMTEHYSGSDLTALARDAALGPIRDLNSDQLKSMAANEVRNITFQDFVNSLQIIRPSVGPETLKAYDDWNRLYGSNA</sequence>
<evidence type="ECO:0000255" key="1"/>
<evidence type="ECO:0000255" key="2">
    <source>
        <dbReference type="HAMAP-Rule" id="MF_03021"/>
    </source>
</evidence>
<evidence type="ECO:0000256" key="3">
    <source>
        <dbReference type="SAM" id="MobiDB-lite"/>
    </source>
</evidence>
<evidence type="ECO:0000305" key="4"/>
<comment type="function">
    <text evidence="2">ATP-dependent microtubule severing protein. Microtubule severing may promote reorganization of cellular microtubule arrays and the release of microtubules from the microtubule organizing center following nucleation.</text>
</comment>
<comment type="catalytic activity">
    <reaction evidence="2">
        <text>n ATP + n H2O + a microtubule = n ADP + n phosphate + (n+1) alpha/beta tubulin heterodimers.</text>
        <dbReference type="EC" id="5.6.1.1"/>
    </reaction>
</comment>
<comment type="subunit">
    <text evidence="2">Homohexamer. The homohexamer is stabilized by ATP-binding. The homohexamer may adopt a ring conformation through which microtubules pass prior to being severed. Interacts with microtubules.</text>
</comment>
<comment type="subcellular location">
    <subcellularLocation>
        <location evidence="2">Membrane</location>
        <topology evidence="2">Peripheral membrane protein</topology>
    </subcellularLocation>
    <subcellularLocation>
        <location evidence="2">Cytoplasm</location>
        <location evidence="2">Cytoskeleton</location>
        <location evidence="2">Microtubule organizing center</location>
        <location evidence="2">Centrosome</location>
    </subcellularLocation>
    <subcellularLocation>
        <location evidence="2">Cytoplasm</location>
        <location evidence="2">Cytoskeleton</location>
    </subcellularLocation>
    <text evidence="2">Forms an intramembrane hairpin-like structure in the membrane.</text>
</comment>
<comment type="similarity">
    <text evidence="2">Belongs to the AAA ATPase family. Spastin subfamily.</text>
</comment>
<comment type="sequence caution" evidence="4">
    <conflict type="erroneous initiation">
        <sequence resource="EMBL-CDS" id="EDO29570"/>
    </conflict>
</comment>